<name>STKLR_ARATH</name>
<protein>
    <recommendedName>
        <fullName evidence="2">Probable transcription factor At4g01260</fullName>
    </recommendedName>
    <alternativeName>
        <fullName evidence="2">Storekeeper-like protein At4g01260</fullName>
    </alternativeName>
</protein>
<sequence>MAPKQLKKIENPVVSSSEEEESASSGESATSGEESDSSADSPVKESSKKPVVVSKPSGSKTTTKPESSTAAKRSFEKTDEMSKKKSKNSMGEEDVKKKDETLKKNLFVRLFTEEDEAILLQGFLDFATKKENPSDHIDDFYESIKNSISFDVTKPQLVTKIGNLKKKFNGRVSKGLKKGKNEEVMVFSKASDQNCFDLSRKIWGSNGVLYSKSKNMRQVQLGGSVKVDEDDQEPQKHRFVISTLSSGQELVSYLKVENPNSLGVDDTKWSAKLDKIKDGKQKRKMEKNLKKIQAKEEELSMMRSEFVAAVTNVLSKQDNASYSCK</sequence>
<feature type="chain" id="PRO_0000436992" description="Probable transcription factor At4g01260">
    <location>
        <begin position="1"/>
        <end position="325"/>
    </location>
</feature>
<feature type="region of interest" description="Disordered" evidence="1">
    <location>
        <begin position="1"/>
        <end position="98"/>
    </location>
</feature>
<feature type="compositionally biased region" description="Low complexity" evidence="1">
    <location>
        <begin position="23"/>
        <end position="32"/>
    </location>
</feature>
<feature type="compositionally biased region" description="Low complexity" evidence="1">
    <location>
        <begin position="49"/>
        <end position="69"/>
    </location>
</feature>
<feature type="compositionally biased region" description="Basic and acidic residues" evidence="1">
    <location>
        <begin position="73"/>
        <end position="83"/>
    </location>
</feature>
<dbReference type="EMBL" id="AF007269">
    <property type="protein sequence ID" value="AAB61042.1"/>
    <property type="molecule type" value="Genomic_DNA"/>
</dbReference>
<dbReference type="EMBL" id="AL161491">
    <property type="protein sequence ID" value="CAB80935.1"/>
    <property type="molecule type" value="Genomic_DNA"/>
</dbReference>
<dbReference type="EMBL" id="CP002687">
    <property type="protein sequence ID" value="AEE82001.1"/>
    <property type="molecule type" value="Genomic_DNA"/>
</dbReference>
<dbReference type="EMBL" id="DQ446792">
    <property type="protein sequence ID" value="ABE65509.1"/>
    <property type="molecule type" value="Genomic_DNA"/>
</dbReference>
<dbReference type="EMBL" id="AB493667">
    <property type="protein sequence ID" value="BAH30505.1"/>
    <property type="molecule type" value="Genomic_DNA"/>
</dbReference>
<dbReference type="PIR" id="T01718">
    <property type="entry name" value="T01718"/>
</dbReference>
<dbReference type="RefSeq" id="NP_192035.1">
    <property type="nucleotide sequence ID" value="NM_116356.1"/>
</dbReference>
<dbReference type="IntAct" id="O04608">
    <property type="interactions" value="3"/>
</dbReference>
<dbReference type="iPTMnet" id="O04608"/>
<dbReference type="PaxDb" id="3702-AT4G01260.1"/>
<dbReference type="ProteomicsDB" id="228352"/>
<dbReference type="EnsemblPlants" id="AT4G01260.1">
    <property type="protein sequence ID" value="AT4G01260.1"/>
    <property type="gene ID" value="AT4G01260"/>
</dbReference>
<dbReference type="GeneID" id="828088"/>
<dbReference type="Gramene" id="AT4G01260.1">
    <property type="protein sequence ID" value="AT4G01260.1"/>
    <property type="gene ID" value="AT4G01260"/>
</dbReference>
<dbReference type="KEGG" id="ath:AT4G01260"/>
<dbReference type="Araport" id="AT4G01260"/>
<dbReference type="TAIR" id="AT4G01260"/>
<dbReference type="eggNOG" id="ENOG502RQE9">
    <property type="taxonomic scope" value="Eukaryota"/>
</dbReference>
<dbReference type="HOGENOM" id="CLU_856181_0_0_1"/>
<dbReference type="InParanoid" id="O04608"/>
<dbReference type="OMA" id="AKWIANW"/>
<dbReference type="PhylomeDB" id="O04608"/>
<dbReference type="PRO" id="PR:O04608"/>
<dbReference type="Proteomes" id="UP000006548">
    <property type="component" value="Chromosome 4"/>
</dbReference>
<dbReference type="ExpressionAtlas" id="O04608">
    <property type="expression patterns" value="baseline"/>
</dbReference>
<dbReference type="GO" id="GO:0000976">
    <property type="term" value="F:transcription cis-regulatory region binding"/>
    <property type="evidence" value="ECO:0000353"/>
    <property type="project" value="TAIR"/>
</dbReference>
<dbReference type="GO" id="GO:0006355">
    <property type="term" value="P:regulation of DNA-templated transcription"/>
    <property type="evidence" value="ECO:0000304"/>
    <property type="project" value="TAIR"/>
</dbReference>
<dbReference type="InterPro" id="IPR007592">
    <property type="entry name" value="GEBP"/>
</dbReference>
<dbReference type="InterPro" id="IPR053932">
    <property type="entry name" value="GeBP-like_DBD"/>
</dbReference>
<dbReference type="PANTHER" id="PTHR31662">
    <property type="entry name" value="BNAANNG10740D PROTEIN-RELATED"/>
    <property type="match status" value="1"/>
</dbReference>
<dbReference type="PANTHER" id="PTHR31662:SF51">
    <property type="entry name" value="GLABROUS1 ENHANCER-BINDING PROTEIN-LIKE"/>
    <property type="match status" value="1"/>
</dbReference>
<dbReference type="Pfam" id="PF04504">
    <property type="entry name" value="GeBP-like_DBD"/>
    <property type="match status" value="1"/>
</dbReference>
<gene>
    <name evidence="3" type="ordered locus">At4g01260</name>
    <name evidence="4" type="ORF">F2N1.32</name>
</gene>
<accession>O04608</accession>
<comment type="similarity">
    <text evidence="2">Belongs to the GeBP family.</text>
</comment>
<comment type="online information" name="Plant Transcription Factor Database">
    <link uri="https://planttfdb.gao-lab.org/family.php?fam=GeBP#family_intro"/>
</comment>
<organism>
    <name type="scientific">Arabidopsis thaliana</name>
    <name type="common">Mouse-ear cress</name>
    <dbReference type="NCBI Taxonomy" id="3702"/>
    <lineage>
        <taxon>Eukaryota</taxon>
        <taxon>Viridiplantae</taxon>
        <taxon>Streptophyta</taxon>
        <taxon>Embryophyta</taxon>
        <taxon>Tracheophyta</taxon>
        <taxon>Spermatophyta</taxon>
        <taxon>Magnoliopsida</taxon>
        <taxon>eudicotyledons</taxon>
        <taxon>Gunneridae</taxon>
        <taxon>Pentapetalae</taxon>
        <taxon>rosids</taxon>
        <taxon>malvids</taxon>
        <taxon>Brassicales</taxon>
        <taxon>Brassicaceae</taxon>
        <taxon>Camelineae</taxon>
        <taxon>Arabidopsis</taxon>
    </lineage>
</organism>
<proteinExistence type="inferred from homology"/>
<keyword id="KW-1185">Reference proteome</keyword>
<keyword id="KW-0804">Transcription</keyword>
<keyword id="KW-0805">Transcription regulation</keyword>
<reference key="1">
    <citation type="journal article" date="1999" name="Nature">
        <title>Sequence and analysis of chromosome 4 of the plant Arabidopsis thaliana.</title>
        <authorList>
            <person name="Mayer K.F.X."/>
            <person name="Schueller C."/>
            <person name="Wambutt R."/>
            <person name="Murphy G."/>
            <person name="Volckaert G."/>
            <person name="Pohl T."/>
            <person name="Duesterhoeft A."/>
            <person name="Stiekema W."/>
            <person name="Entian K.-D."/>
            <person name="Terryn N."/>
            <person name="Harris B."/>
            <person name="Ansorge W."/>
            <person name="Brandt P."/>
            <person name="Grivell L.A."/>
            <person name="Rieger M."/>
            <person name="Weichselgartner M."/>
            <person name="de Simone V."/>
            <person name="Obermaier B."/>
            <person name="Mache R."/>
            <person name="Mueller M."/>
            <person name="Kreis M."/>
            <person name="Delseny M."/>
            <person name="Puigdomenech P."/>
            <person name="Watson M."/>
            <person name="Schmidtheini T."/>
            <person name="Reichert B."/>
            <person name="Portetelle D."/>
            <person name="Perez-Alonso M."/>
            <person name="Boutry M."/>
            <person name="Bancroft I."/>
            <person name="Vos P."/>
            <person name="Hoheisel J."/>
            <person name="Zimmermann W."/>
            <person name="Wedler H."/>
            <person name="Ridley P."/>
            <person name="Langham S.-A."/>
            <person name="McCullagh B."/>
            <person name="Bilham L."/>
            <person name="Robben J."/>
            <person name="van der Schueren J."/>
            <person name="Grymonprez B."/>
            <person name="Chuang Y.-J."/>
            <person name="Vandenbussche F."/>
            <person name="Braeken M."/>
            <person name="Weltjens I."/>
            <person name="Voet M."/>
            <person name="Bastiaens I."/>
            <person name="Aert R."/>
            <person name="Defoor E."/>
            <person name="Weitzenegger T."/>
            <person name="Bothe G."/>
            <person name="Ramsperger U."/>
            <person name="Hilbert H."/>
            <person name="Braun M."/>
            <person name="Holzer E."/>
            <person name="Brandt A."/>
            <person name="Peters S."/>
            <person name="van Staveren M."/>
            <person name="Dirkse W."/>
            <person name="Mooijman P."/>
            <person name="Klein Lankhorst R."/>
            <person name="Rose M."/>
            <person name="Hauf J."/>
            <person name="Koetter P."/>
            <person name="Berneiser S."/>
            <person name="Hempel S."/>
            <person name="Feldpausch M."/>
            <person name="Lamberth S."/>
            <person name="Van den Daele H."/>
            <person name="De Keyser A."/>
            <person name="Buysshaert C."/>
            <person name="Gielen J."/>
            <person name="Villarroel R."/>
            <person name="De Clercq R."/>
            <person name="van Montagu M."/>
            <person name="Rogers J."/>
            <person name="Cronin A."/>
            <person name="Quail M.A."/>
            <person name="Bray-Allen S."/>
            <person name="Clark L."/>
            <person name="Doggett J."/>
            <person name="Hall S."/>
            <person name="Kay M."/>
            <person name="Lennard N."/>
            <person name="McLay K."/>
            <person name="Mayes R."/>
            <person name="Pettett A."/>
            <person name="Rajandream M.A."/>
            <person name="Lyne M."/>
            <person name="Benes V."/>
            <person name="Rechmann S."/>
            <person name="Borkova D."/>
            <person name="Bloecker H."/>
            <person name="Scharfe M."/>
            <person name="Grimm M."/>
            <person name="Loehnert T.-H."/>
            <person name="Dose S."/>
            <person name="de Haan M."/>
            <person name="Maarse A.C."/>
            <person name="Schaefer M."/>
            <person name="Mueller-Auer S."/>
            <person name="Gabel C."/>
            <person name="Fuchs M."/>
            <person name="Fartmann B."/>
            <person name="Granderath K."/>
            <person name="Dauner D."/>
            <person name="Herzl A."/>
            <person name="Neumann S."/>
            <person name="Argiriou A."/>
            <person name="Vitale D."/>
            <person name="Liguori R."/>
            <person name="Piravandi E."/>
            <person name="Massenet O."/>
            <person name="Quigley F."/>
            <person name="Clabauld G."/>
            <person name="Muendlein A."/>
            <person name="Felber R."/>
            <person name="Schnabl S."/>
            <person name="Hiller R."/>
            <person name="Schmidt W."/>
            <person name="Lecharny A."/>
            <person name="Aubourg S."/>
            <person name="Chefdor F."/>
            <person name="Cooke R."/>
            <person name="Berger C."/>
            <person name="Monfort A."/>
            <person name="Casacuberta E."/>
            <person name="Gibbons T."/>
            <person name="Weber N."/>
            <person name="Vandenbol M."/>
            <person name="Bargues M."/>
            <person name="Terol J."/>
            <person name="Torres A."/>
            <person name="Perez-Perez A."/>
            <person name="Purnelle B."/>
            <person name="Bent E."/>
            <person name="Johnson S."/>
            <person name="Tacon D."/>
            <person name="Jesse T."/>
            <person name="Heijnen L."/>
            <person name="Schwarz S."/>
            <person name="Scholler P."/>
            <person name="Heber S."/>
            <person name="Francs P."/>
            <person name="Bielke C."/>
            <person name="Frishman D."/>
            <person name="Haase D."/>
            <person name="Lemcke K."/>
            <person name="Mewes H.-W."/>
            <person name="Stocker S."/>
            <person name="Zaccaria P."/>
            <person name="Bevan M."/>
            <person name="Wilson R.K."/>
            <person name="de la Bastide M."/>
            <person name="Habermann K."/>
            <person name="Parnell L."/>
            <person name="Dedhia N."/>
            <person name="Gnoj L."/>
            <person name="Schutz K."/>
            <person name="Huang E."/>
            <person name="Spiegel L."/>
            <person name="Sekhon M."/>
            <person name="Murray J."/>
            <person name="Sheet P."/>
            <person name="Cordes M."/>
            <person name="Abu-Threideh J."/>
            <person name="Stoneking T."/>
            <person name="Kalicki J."/>
            <person name="Graves T."/>
            <person name="Harmon G."/>
            <person name="Edwards J."/>
            <person name="Latreille P."/>
            <person name="Courtney L."/>
            <person name="Cloud J."/>
            <person name="Abbott A."/>
            <person name="Scott K."/>
            <person name="Johnson D."/>
            <person name="Minx P."/>
            <person name="Bentley D."/>
            <person name="Fulton B."/>
            <person name="Miller N."/>
            <person name="Greco T."/>
            <person name="Kemp K."/>
            <person name="Kramer J."/>
            <person name="Fulton L."/>
            <person name="Mardis E."/>
            <person name="Dante M."/>
            <person name="Pepin K."/>
            <person name="Hillier L.W."/>
            <person name="Nelson J."/>
            <person name="Spieth J."/>
            <person name="Ryan E."/>
            <person name="Andrews S."/>
            <person name="Geisel C."/>
            <person name="Layman D."/>
            <person name="Du H."/>
            <person name="Ali J."/>
            <person name="Berghoff A."/>
            <person name="Jones K."/>
            <person name="Drone K."/>
            <person name="Cotton M."/>
            <person name="Joshu C."/>
            <person name="Antonoiu B."/>
            <person name="Zidanic M."/>
            <person name="Strong C."/>
            <person name="Sun H."/>
            <person name="Lamar B."/>
            <person name="Yordan C."/>
            <person name="Ma P."/>
            <person name="Zhong J."/>
            <person name="Preston R."/>
            <person name="Vil D."/>
            <person name="Shekher M."/>
            <person name="Matero A."/>
            <person name="Shah R."/>
            <person name="Swaby I.K."/>
            <person name="O'Shaughnessy A."/>
            <person name="Rodriguez M."/>
            <person name="Hoffman J."/>
            <person name="Till S."/>
            <person name="Granat S."/>
            <person name="Shohdy N."/>
            <person name="Hasegawa A."/>
            <person name="Hameed A."/>
            <person name="Lodhi M."/>
            <person name="Johnson A."/>
            <person name="Chen E."/>
            <person name="Marra M.A."/>
            <person name="Martienssen R."/>
            <person name="McCombie W.R."/>
        </authorList>
    </citation>
    <scope>NUCLEOTIDE SEQUENCE [LARGE SCALE GENOMIC DNA]</scope>
    <source>
        <strain>cv. Columbia</strain>
    </source>
</reference>
<reference key="2">
    <citation type="journal article" date="2017" name="Plant J.">
        <title>Araport11: a complete reannotation of the Arabidopsis thaliana reference genome.</title>
        <authorList>
            <person name="Cheng C.Y."/>
            <person name="Krishnakumar V."/>
            <person name="Chan A.P."/>
            <person name="Thibaud-Nissen F."/>
            <person name="Schobel S."/>
            <person name="Town C.D."/>
        </authorList>
    </citation>
    <scope>GENOME REANNOTATION</scope>
    <source>
        <strain>cv. Columbia</strain>
    </source>
</reference>
<reference key="3">
    <citation type="journal article" date="2006" name="Plant Biotechnol. J.">
        <title>Simultaneous high-throughput recombinational cloning of open reading frames in closed and open configurations.</title>
        <authorList>
            <person name="Underwood B.A."/>
            <person name="Vanderhaeghen R."/>
            <person name="Whitford R."/>
            <person name="Town C.D."/>
            <person name="Hilson P."/>
        </authorList>
    </citation>
    <scope>NUCLEOTIDE SEQUENCE [LARGE SCALE GENOMIC DNA]</scope>
    <source>
        <strain>cv. Columbia</strain>
    </source>
</reference>
<reference key="4">
    <citation type="submission" date="2009-03" db="EMBL/GenBank/DDBJ databases">
        <title>ORF cloning and analysis of Arabidopsis transcription factor genes.</title>
        <authorList>
            <person name="Fujita M."/>
            <person name="Mizukado S."/>
            <person name="Seki M."/>
            <person name="Shinozaki K."/>
            <person name="Mitsuda N."/>
            <person name="Takiguchi Y."/>
            <person name="Takagi M."/>
        </authorList>
    </citation>
    <scope>NUCLEOTIDE SEQUENCE [LARGE SCALE GENOMIC DNA]</scope>
</reference>
<reference key="5">
    <citation type="journal article" date="2003" name="Plant J.">
        <title>GeBP, the first member of a new gene family in Arabidopsis, encodes a nuclear protein with DNA-binding activity and is regulated by KNAT1.</title>
        <authorList>
            <person name="Curaba J."/>
            <person name="Herzog M."/>
            <person name="Vachon G."/>
        </authorList>
    </citation>
    <scope>GENE FAMILY</scope>
</reference>
<reference key="6">
    <citation type="journal article" date="2016" name="Plant Physiol. Biochem.">
        <title>Regulation of Arabidopsis thaliana plasma membrane glucose-responsive regulator (AtPGR) expression by A. thaliana storekeeper-like transcription factor, AtSTKL, modulates glucose response in Arabidopsis.</title>
        <authorList>
            <person name="Chung M.S."/>
            <person name="Lee S."/>
            <person name="Min J.H."/>
            <person name="Huang P."/>
            <person name="Ju H.W."/>
            <person name="Kim C.S."/>
        </authorList>
    </citation>
    <scope>GENE FAMILY</scope>
</reference>
<evidence type="ECO:0000256" key="1">
    <source>
        <dbReference type="SAM" id="MobiDB-lite"/>
    </source>
</evidence>
<evidence type="ECO:0000305" key="2"/>
<evidence type="ECO:0000312" key="3">
    <source>
        <dbReference type="Araport" id="AT4G01260"/>
    </source>
</evidence>
<evidence type="ECO:0000312" key="4">
    <source>
        <dbReference type="EMBL" id="AAB61042.1"/>
    </source>
</evidence>